<evidence type="ECO:0000255" key="1">
    <source>
        <dbReference type="HAMAP-Rule" id="MF_00114"/>
    </source>
</evidence>
<gene>
    <name evidence="1" type="primary">deoC</name>
    <name type="ordered locus">TGAM_0176</name>
</gene>
<dbReference type="EC" id="4.1.2.4" evidence="1"/>
<dbReference type="EMBL" id="CP001398">
    <property type="protein sequence ID" value="ACS32678.1"/>
    <property type="molecule type" value="Genomic_DNA"/>
</dbReference>
<dbReference type="SMR" id="C5A366"/>
<dbReference type="STRING" id="593117.TGAM_0176"/>
<dbReference type="PaxDb" id="593117-TGAM_0176"/>
<dbReference type="KEGG" id="tga:TGAM_0176"/>
<dbReference type="PATRIC" id="fig|593117.10.peg.178"/>
<dbReference type="eggNOG" id="arCOG04320">
    <property type="taxonomic scope" value="Archaea"/>
</dbReference>
<dbReference type="HOGENOM" id="CLU_053595_0_2_2"/>
<dbReference type="UniPathway" id="UPA00002">
    <property type="reaction ID" value="UER00468"/>
</dbReference>
<dbReference type="Proteomes" id="UP000001488">
    <property type="component" value="Chromosome"/>
</dbReference>
<dbReference type="GO" id="GO:0005737">
    <property type="term" value="C:cytoplasm"/>
    <property type="evidence" value="ECO:0007669"/>
    <property type="project" value="UniProtKB-SubCell"/>
</dbReference>
<dbReference type="GO" id="GO:0004139">
    <property type="term" value="F:deoxyribose-phosphate aldolase activity"/>
    <property type="evidence" value="ECO:0007669"/>
    <property type="project" value="UniProtKB-UniRule"/>
</dbReference>
<dbReference type="GO" id="GO:0006018">
    <property type="term" value="P:2-deoxyribose 1-phosphate catabolic process"/>
    <property type="evidence" value="ECO:0007669"/>
    <property type="project" value="UniProtKB-UniRule"/>
</dbReference>
<dbReference type="GO" id="GO:0016052">
    <property type="term" value="P:carbohydrate catabolic process"/>
    <property type="evidence" value="ECO:0007669"/>
    <property type="project" value="TreeGrafter"/>
</dbReference>
<dbReference type="GO" id="GO:0009264">
    <property type="term" value="P:deoxyribonucleotide catabolic process"/>
    <property type="evidence" value="ECO:0007669"/>
    <property type="project" value="InterPro"/>
</dbReference>
<dbReference type="CDD" id="cd00959">
    <property type="entry name" value="DeoC"/>
    <property type="match status" value="1"/>
</dbReference>
<dbReference type="FunFam" id="3.20.20.70:FF:000044">
    <property type="entry name" value="Deoxyribose-phosphate aldolase"/>
    <property type="match status" value="1"/>
</dbReference>
<dbReference type="Gene3D" id="3.20.20.70">
    <property type="entry name" value="Aldolase class I"/>
    <property type="match status" value="1"/>
</dbReference>
<dbReference type="HAMAP" id="MF_00114">
    <property type="entry name" value="DeoC_type1"/>
    <property type="match status" value="1"/>
</dbReference>
<dbReference type="InterPro" id="IPR013785">
    <property type="entry name" value="Aldolase_TIM"/>
</dbReference>
<dbReference type="InterPro" id="IPR011343">
    <property type="entry name" value="DeoC"/>
</dbReference>
<dbReference type="InterPro" id="IPR002915">
    <property type="entry name" value="DeoC/FbaB/LacD_aldolase"/>
</dbReference>
<dbReference type="InterPro" id="IPR028581">
    <property type="entry name" value="DeoC_typeI"/>
</dbReference>
<dbReference type="NCBIfam" id="TIGR00126">
    <property type="entry name" value="deoC"/>
    <property type="match status" value="1"/>
</dbReference>
<dbReference type="PANTHER" id="PTHR10889">
    <property type="entry name" value="DEOXYRIBOSE-PHOSPHATE ALDOLASE"/>
    <property type="match status" value="1"/>
</dbReference>
<dbReference type="PANTHER" id="PTHR10889:SF1">
    <property type="entry name" value="DEOXYRIBOSE-PHOSPHATE ALDOLASE"/>
    <property type="match status" value="1"/>
</dbReference>
<dbReference type="Pfam" id="PF01791">
    <property type="entry name" value="DeoC"/>
    <property type="match status" value="1"/>
</dbReference>
<dbReference type="PIRSF" id="PIRSF001357">
    <property type="entry name" value="DeoC"/>
    <property type="match status" value="1"/>
</dbReference>
<dbReference type="SMART" id="SM01133">
    <property type="entry name" value="DeoC"/>
    <property type="match status" value="1"/>
</dbReference>
<dbReference type="SUPFAM" id="SSF51569">
    <property type="entry name" value="Aldolase"/>
    <property type="match status" value="1"/>
</dbReference>
<comment type="function">
    <text evidence="1">Catalyzes a reversible aldol reaction between acetaldehyde and D-glyceraldehyde 3-phosphate to generate 2-deoxy-D-ribose 5-phosphate.</text>
</comment>
<comment type="catalytic activity">
    <reaction evidence="1">
        <text>2-deoxy-D-ribose 5-phosphate = D-glyceraldehyde 3-phosphate + acetaldehyde</text>
        <dbReference type="Rhea" id="RHEA:12821"/>
        <dbReference type="ChEBI" id="CHEBI:15343"/>
        <dbReference type="ChEBI" id="CHEBI:59776"/>
        <dbReference type="ChEBI" id="CHEBI:62877"/>
        <dbReference type="EC" id="4.1.2.4"/>
    </reaction>
</comment>
<comment type="pathway">
    <text evidence="1">Carbohydrate degradation; 2-deoxy-D-ribose 1-phosphate degradation; D-glyceraldehyde 3-phosphate and acetaldehyde from 2-deoxy-alpha-D-ribose 1-phosphate: step 2/2.</text>
</comment>
<comment type="subcellular location">
    <subcellularLocation>
        <location evidence="1">Cytoplasm</location>
    </subcellularLocation>
</comment>
<comment type="similarity">
    <text evidence="1">Belongs to the DeoC/FbaB aldolase family. DeoC type 1 subfamily.</text>
</comment>
<keyword id="KW-0963">Cytoplasm</keyword>
<keyword id="KW-0456">Lyase</keyword>
<keyword id="KW-1185">Reference proteome</keyword>
<keyword id="KW-0704">Schiff base</keyword>
<feature type="chain" id="PRO_1000202971" description="Deoxyribose-phosphate aldolase">
    <location>
        <begin position="1"/>
        <end position="225"/>
    </location>
</feature>
<feature type="active site" description="Proton donor/acceptor" evidence="1">
    <location>
        <position position="94"/>
    </location>
</feature>
<feature type="active site" description="Schiff-base intermediate with acetaldehyde" evidence="1">
    <location>
        <position position="158"/>
    </location>
</feature>
<feature type="active site" description="Proton donor/acceptor" evidence="1">
    <location>
        <position position="187"/>
    </location>
</feature>
<protein>
    <recommendedName>
        <fullName evidence="1">Deoxyribose-phosphate aldolase</fullName>
        <shortName evidence="1">DERA</shortName>
        <ecNumber evidence="1">4.1.2.4</ecNumber>
    </recommendedName>
    <alternativeName>
        <fullName evidence="1">2-deoxy-D-ribose 5-phosphate aldolase</fullName>
    </alternativeName>
    <alternativeName>
        <fullName evidence="1">Phosphodeoxyriboaldolase</fullName>
        <shortName evidence="1">Deoxyriboaldolase</shortName>
    </alternativeName>
</protein>
<name>DEOC_THEGJ</name>
<accession>C5A366</accession>
<proteinExistence type="inferred from homology"/>
<sequence length="225" mass="24420">MVGMDIAKYIDHTNLKPYATKEDIIKLCDEAIQYGFYAVCVNPYRVKLAKEYLSEKKADVKVASVIGFPLGATPTEVKVFEARKALEDGADELDMVINIGALKDGDYDYVKRDIEEVVKVAHEKGAKVKVIIETCYLTEEEKIKACELAKEAGADFVKTSTGFGTGGATVEDVRLMRKVVGPEMGVKAAGGIRTYEQALAMIEAGANRIGTSSGVRIVEGARNAE</sequence>
<reference key="1">
    <citation type="journal article" date="2007" name="Genome Biol.">
        <title>Genome analysis and genome-wide proteomics of Thermococcus gammatolerans, the most radioresistant organism known amongst the Archaea.</title>
        <authorList>
            <person name="Zivanovic Y."/>
            <person name="Armengaud J."/>
            <person name="Lagorce A."/>
            <person name="Leplat C."/>
            <person name="Guerin P."/>
            <person name="Dutertre M."/>
            <person name="Anthouard V."/>
            <person name="Forterre P."/>
            <person name="Wincker P."/>
            <person name="Confalonieri F."/>
        </authorList>
    </citation>
    <scope>NUCLEOTIDE SEQUENCE [LARGE SCALE GENOMIC DNA]</scope>
    <source>
        <strain>DSM 15229 / JCM 11827 / EJ3</strain>
    </source>
</reference>
<organism>
    <name type="scientific">Thermococcus gammatolerans (strain DSM 15229 / JCM 11827 / EJ3)</name>
    <dbReference type="NCBI Taxonomy" id="593117"/>
    <lineage>
        <taxon>Archaea</taxon>
        <taxon>Methanobacteriati</taxon>
        <taxon>Methanobacteriota</taxon>
        <taxon>Thermococci</taxon>
        <taxon>Thermococcales</taxon>
        <taxon>Thermococcaceae</taxon>
        <taxon>Thermococcus</taxon>
    </lineage>
</organism>